<protein>
    <recommendedName>
        <fullName evidence="1">Acetyl-coenzyme A carboxylase carboxyl transferase subunit alpha</fullName>
        <shortName evidence="1">ACCase subunit alpha</shortName>
        <shortName evidence="1">Acetyl-CoA carboxylase carboxyltransferase subunit alpha</shortName>
        <ecNumber evidence="1">2.1.3.15</ecNumber>
    </recommendedName>
</protein>
<feature type="chain" id="PRO_0000223811" description="Acetyl-coenzyme A carboxylase carboxyl transferase subunit alpha">
    <location>
        <begin position="1"/>
        <end position="315"/>
    </location>
</feature>
<feature type="domain" description="CoA carboxyltransferase C-terminal" evidence="2">
    <location>
        <begin position="40"/>
        <end position="293"/>
    </location>
</feature>
<sequence length="315" mass="35077">MNPNFLDFEQPIADLQAKIEELRLVGNDNSLNIGDEISRLQDKSKTLTESIFGNLTSWQIARMARHPRRPYTLDYIENIFTEFDELHGDRHFSDDAAIVGGIARLDNQPVMVIGHQKGREVREKVRRNFGMPRPEGYRKACRLMEMAERFKMPILTFIDTPGAYPGIDAEERNQSEAIAWNLRVMARLKTPIIATVIGEGGSGGALAIGVCDQLNMLQYSTYAVISPEGCASILWKTAEKAPDAAEAMGITADRLKGLGIVDKVIAEPLGGAHRDPVAAAALIREELSSQLAMLKEFDNDELLARRYDRLMSYGL</sequence>
<name>ACCA_PSEU2</name>
<keyword id="KW-0067">ATP-binding</keyword>
<keyword id="KW-0963">Cytoplasm</keyword>
<keyword id="KW-0275">Fatty acid biosynthesis</keyword>
<keyword id="KW-0276">Fatty acid metabolism</keyword>
<keyword id="KW-0444">Lipid biosynthesis</keyword>
<keyword id="KW-0443">Lipid metabolism</keyword>
<keyword id="KW-0547">Nucleotide-binding</keyword>
<keyword id="KW-0808">Transferase</keyword>
<reference key="1">
    <citation type="journal article" date="2005" name="Proc. Natl. Acad. Sci. U.S.A.">
        <title>Comparison of the complete genome sequences of Pseudomonas syringae pv. syringae B728a and pv. tomato DC3000.</title>
        <authorList>
            <person name="Feil H."/>
            <person name="Feil W.S."/>
            <person name="Chain P."/>
            <person name="Larimer F."/>
            <person name="Dibartolo G."/>
            <person name="Copeland A."/>
            <person name="Lykidis A."/>
            <person name="Trong S."/>
            <person name="Nolan M."/>
            <person name="Goltsman E."/>
            <person name="Thiel J."/>
            <person name="Malfatti S."/>
            <person name="Loper J.E."/>
            <person name="Lapidus A."/>
            <person name="Detter J.C."/>
            <person name="Land M."/>
            <person name="Richardson P.M."/>
            <person name="Kyrpides N.C."/>
            <person name="Ivanova N."/>
            <person name="Lindow S.E."/>
        </authorList>
    </citation>
    <scope>NUCLEOTIDE SEQUENCE [LARGE SCALE GENOMIC DNA]</scope>
    <source>
        <strain>B728a</strain>
    </source>
</reference>
<accession>Q4ZWR2</accession>
<proteinExistence type="inferred from homology"/>
<organism>
    <name type="scientific">Pseudomonas syringae pv. syringae (strain B728a)</name>
    <dbReference type="NCBI Taxonomy" id="205918"/>
    <lineage>
        <taxon>Bacteria</taxon>
        <taxon>Pseudomonadati</taxon>
        <taxon>Pseudomonadota</taxon>
        <taxon>Gammaproteobacteria</taxon>
        <taxon>Pseudomonadales</taxon>
        <taxon>Pseudomonadaceae</taxon>
        <taxon>Pseudomonas</taxon>
        <taxon>Pseudomonas syringae</taxon>
    </lineage>
</organism>
<comment type="function">
    <text evidence="1">Component of the acetyl coenzyme A carboxylase (ACC) complex. First, biotin carboxylase catalyzes the carboxylation of biotin on its carrier protein (BCCP) and then the CO(2) group is transferred by the carboxyltransferase to acetyl-CoA to form malonyl-CoA.</text>
</comment>
<comment type="catalytic activity">
    <reaction evidence="1">
        <text>N(6)-carboxybiotinyl-L-lysyl-[protein] + acetyl-CoA = N(6)-biotinyl-L-lysyl-[protein] + malonyl-CoA</text>
        <dbReference type="Rhea" id="RHEA:54728"/>
        <dbReference type="Rhea" id="RHEA-COMP:10505"/>
        <dbReference type="Rhea" id="RHEA-COMP:10506"/>
        <dbReference type="ChEBI" id="CHEBI:57288"/>
        <dbReference type="ChEBI" id="CHEBI:57384"/>
        <dbReference type="ChEBI" id="CHEBI:83144"/>
        <dbReference type="ChEBI" id="CHEBI:83145"/>
        <dbReference type="EC" id="2.1.3.15"/>
    </reaction>
</comment>
<comment type="pathway">
    <text evidence="1">Lipid metabolism; malonyl-CoA biosynthesis; malonyl-CoA from acetyl-CoA: step 1/1.</text>
</comment>
<comment type="subunit">
    <text evidence="1">Acetyl-CoA carboxylase is a heterohexamer composed of biotin carboxyl carrier protein (AccB), biotin carboxylase (AccC) and two subunits each of ACCase subunit alpha (AccA) and ACCase subunit beta (AccD).</text>
</comment>
<comment type="subcellular location">
    <subcellularLocation>
        <location evidence="1">Cytoplasm</location>
    </subcellularLocation>
</comment>
<comment type="similarity">
    <text evidence="1">Belongs to the AccA family.</text>
</comment>
<comment type="sequence caution" evidence="3">
    <conflict type="erroneous initiation">
        <sequence resource="EMBL-CDS" id="AAY36410"/>
    </conflict>
</comment>
<evidence type="ECO:0000255" key="1">
    <source>
        <dbReference type="HAMAP-Rule" id="MF_00823"/>
    </source>
</evidence>
<evidence type="ECO:0000255" key="2">
    <source>
        <dbReference type="PROSITE-ProRule" id="PRU01137"/>
    </source>
</evidence>
<evidence type="ECO:0000305" key="3"/>
<gene>
    <name evidence="1" type="primary">accA</name>
    <name type="ordered locus">Psyr_1359</name>
</gene>
<dbReference type="EC" id="2.1.3.15" evidence="1"/>
<dbReference type="EMBL" id="CP000075">
    <property type="protein sequence ID" value="AAY36410.1"/>
    <property type="status" value="ALT_INIT"/>
    <property type="molecule type" value="Genomic_DNA"/>
</dbReference>
<dbReference type="RefSeq" id="WP_003364825.1">
    <property type="nucleotide sequence ID" value="NC_007005.1"/>
</dbReference>
<dbReference type="RefSeq" id="YP_234448.2">
    <property type="nucleotide sequence ID" value="NC_007005.1"/>
</dbReference>
<dbReference type="SMR" id="Q4ZWR2"/>
<dbReference type="STRING" id="205918.Psyr_1359"/>
<dbReference type="GeneID" id="77277315"/>
<dbReference type="KEGG" id="psb:Psyr_1359"/>
<dbReference type="PATRIC" id="fig|205918.7.peg.1392"/>
<dbReference type="eggNOG" id="COG0825">
    <property type="taxonomic scope" value="Bacteria"/>
</dbReference>
<dbReference type="HOGENOM" id="CLU_015486_0_2_6"/>
<dbReference type="OrthoDB" id="9808023at2"/>
<dbReference type="UniPathway" id="UPA00655">
    <property type="reaction ID" value="UER00711"/>
</dbReference>
<dbReference type="Proteomes" id="UP000000426">
    <property type="component" value="Chromosome"/>
</dbReference>
<dbReference type="GO" id="GO:0009317">
    <property type="term" value="C:acetyl-CoA carboxylase complex"/>
    <property type="evidence" value="ECO:0007669"/>
    <property type="project" value="InterPro"/>
</dbReference>
<dbReference type="GO" id="GO:0003989">
    <property type="term" value="F:acetyl-CoA carboxylase activity"/>
    <property type="evidence" value="ECO:0007669"/>
    <property type="project" value="InterPro"/>
</dbReference>
<dbReference type="GO" id="GO:0005524">
    <property type="term" value="F:ATP binding"/>
    <property type="evidence" value="ECO:0007669"/>
    <property type="project" value="UniProtKB-KW"/>
</dbReference>
<dbReference type="GO" id="GO:0016743">
    <property type="term" value="F:carboxyl- or carbamoyltransferase activity"/>
    <property type="evidence" value="ECO:0007669"/>
    <property type="project" value="UniProtKB-UniRule"/>
</dbReference>
<dbReference type="GO" id="GO:0006633">
    <property type="term" value="P:fatty acid biosynthetic process"/>
    <property type="evidence" value="ECO:0007669"/>
    <property type="project" value="UniProtKB-KW"/>
</dbReference>
<dbReference type="GO" id="GO:2001295">
    <property type="term" value="P:malonyl-CoA biosynthetic process"/>
    <property type="evidence" value="ECO:0007669"/>
    <property type="project" value="UniProtKB-UniRule"/>
</dbReference>
<dbReference type="FunFam" id="3.90.226.10:FF:000008">
    <property type="entry name" value="Acetyl-coenzyme A carboxylase carboxyl transferase subunit alpha"/>
    <property type="match status" value="1"/>
</dbReference>
<dbReference type="Gene3D" id="3.90.226.10">
    <property type="entry name" value="2-enoyl-CoA Hydratase, Chain A, domain 1"/>
    <property type="match status" value="1"/>
</dbReference>
<dbReference type="HAMAP" id="MF_00823">
    <property type="entry name" value="AcetylCoA_CT_alpha"/>
    <property type="match status" value="1"/>
</dbReference>
<dbReference type="InterPro" id="IPR001095">
    <property type="entry name" value="Acetyl_CoA_COase_a_su"/>
</dbReference>
<dbReference type="InterPro" id="IPR029045">
    <property type="entry name" value="ClpP/crotonase-like_dom_sf"/>
</dbReference>
<dbReference type="InterPro" id="IPR011763">
    <property type="entry name" value="COA_CT_C"/>
</dbReference>
<dbReference type="NCBIfam" id="TIGR00513">
    <property type="entry name" value="accA"/>
    <property type="match status" value="1"/>
</dbReference>
<dbReference type="NCBIfam" id="NF041504">
    <property type="entry name" value="AccA_sub"/>
    <property type="match status" value="1"/>
</dbReference>
<dbReference type="NCBIfam" id="NF004344">
    <property type="entry name" value="PRK05724.1"/>
    <property type="match status" value="1"/>
</dbReference>
<dbReference type="PANTHER" id="PTHR42853">
    <property type="entry name" value="ACETYL-COENZYME A CARBOXYLASE CARBOXYL TRANSFERASE SUBUNIT ALPHA"/>
    <property type="match status" value="1"/>
</dbReference>
<dbReference type="PANTHER" id="PTHR42853:SF3">
    <property type="entry name" value="ACETYL-COENZYME A CARBOXYLASE CARBOXYL TRANSFERASE SUBUNIT ALPHA, CHLOROPLASTIC"/>
    <property type="match status" value="1"/>
</dbReference>
<dbReference type="Pfam" id="PF03255">
    <property type="entry name" value="ACCA"/>
    <property type="match status" value="1"/>
</dbReference>
<dbReference type="PRINTS" id="PR01069">
    <property type="entry name" value="ACCCTRFRASEA"/>
</dbReference>
<dbReference type="SUPFAM" id="SSF52096">
    <property type="entry name" value="ClpP/crotonase"/>
    <property type="match status" value="1"/>
</dbReference>
<dbReference type="PROSITE" id="PS50989">
    <property type="entry name" value="COA_CT_CTER"/>
    <property type="match status" value="1"/>
</dbReference>